<proteinExistence type="evidence at protein level"/>
<evidence type="ECO:0000250" key="1"/>
<evidence type="ECO:0000269" key="2">
    <source>
    </source>
</evidence>
<evidence type="ECO:0000269" key="3">
    <source>
    </source>
</evidence>
<evidence type="ECO:0000305" key="4"/>
<feature type="chain" id="PRO_0000120562" description="Ureidoglycolate lyase">
    <location>
        <begin position="1"/>
        <end position="195"/>
    </location>
</feature>
<name>ALLA_YEAST</name>
<protein>
    <recommendedName>
        <fullName>Ureidoglycolate lyase</fullName>
        <ecNumber>4.3.2.3</ecNumber>
    </recommendedName>
    <alternativeName>
        <fullName>Degradation of allantoin protein 3</fullName>
    </alternativeName>
    <alternativeName>
        <fullName>Ureidoglycolatase</fullName>
    </alternativeName>
    <alternativeName>
        <fullName>Ureidoglycolate hydrolase</fullName>
    </alternativeName>
</protein>
<gene>
    <name type="primary">DAL3</name>
    <name type="ordered locus">YIR032C</name>
</gene>
<accession>P32459</accession>
<accession>D6VVW3</accession>
<dbReference type="EC" id="4.3.2.3"/>
<dbReference type="EMBL" id="M64778">
    <property type="protein sequence ID" value="AAA73025.1"/>
    <property type="molecule type" value="Genomic_DNA"/>
</dbReference>
<dbReference type="EMBL" id="Z38061">
    <property type="protein sequence ID" value="CAA86192.1"/>
    <property type="molecule type" value="Genomic_DNA"/>
</dbReference>
<dbReference type="EMBL" id="BK006942">
    <property type="protein sequence ID" value="DAA08579.1"/>
    <property type="molecule type" value="Genomic_DNA"/>
</dbReference>
<dbReference type="PIR" id="S42022">
    <property type="entry name" value="S42022"/>
</dbReference>
<dbReference type="RefSeq" id="NP_012298.1">
    <property type="nucleotide sequence ID" value="NM_001179554.1"/>
</dbReference>
<dbReference type="SMR" id="P32459"/>
<dbReference type="BioGRID" id="35023">
    <property type="interactions" value="122"/>
</dbReference>
<dbReference type="DIP" id="DIP-1284N"/>
<dbReference type="FunCoup" id="P32459">
    <property type="interactions" value="118"/>
</dbReference>
<dbReference type="IntAct" id="P32459">
    <property type="interactions" value="2"/>
</dbReference>
<dbReference type="MINT" id="P32459"/>
<dbReference type="STRING" id="4932.YIR032C"/>
<dbReference type="PaxDb" id="4932-YIR032C"/>
<dbReference type="PeptideAtlas" id="P32459"/>
<dbReference type="EnsemblFungi" id="YIR032C_mRNA">
    <property type="protein sequence ID" value="YIR032C"/>
    <property type="gene ID" value="YIR032C"/>
</dbReference>
<dbReference type="GeneID" id="854850"/>
<dbReference type="KEGG" id="sce:YIR032C"/>
<dbReference type="AGR" id="SGD:S000001471"/>
<dbReference type="SGD" id="S000001471">
    <property type="gene designation" value="DAL3"/>
</dbReference>
<dbReference type="VEuPathDB" id="FungiDB:YIR032C"/>
<dbReference type="eggNOG" id="ENOG502S1JQ">
    <property type="taxonomic scope" value="Eukaryota"/>
</dbReference>
<dbReference type="HOGENOM" id="CLU_070848_0_1_1"/>
<dbReference type="InParanoid" id="P32459"/>
<dbReference type="OMA" id="ECYFEPG"/>
<dbReference type="OrthoDB" id="10266039at2759"/>
<dbReference type="BioCyc" id="MetaCyc:YIR032C-MONOMER"/>
<dbReference type="BioCyc" id="YEAST:YIR032C-MONOMER"/>
<dbReference type="BRENDA" id="4.3.2.3">
    <property type="organism ID" value="984"/>
</dbReference>
<dbReference type="UniPathway" id="UPA00395"/>
<dbReference type="BioGRID-ORCS" id="854850">
    <property type="hits" value="4 hits in 10 CRISPR screens"/>
</dbReference>
<dbReference type="PRO" id="PR:P32459"/>
<dbReference type="Proteomes" id="UP000002311">
    <property type="component" value="Chromosome IX"/>
</dbReference>
<dbReference type="RNAct" id="P32459">
    <property type="molecule type" value="protein"/>
</dbReference>
<dbReference type="GO" id="GO:0016020">
    <property type="term" value="C:membrane"/>
    <property type="evidence" value="ECO:0000250"/>
    <property type="project" value="SGD"/>
</dbReference>
<dbReference type="GO" id="GO:0004848">
    <property type="term" value="F:ureidoglycolate hydrolase activity"/>
    <property type="evidence" value="ECO:0007669"/>
    <property type="project" value="InterPro"/>
</dbReference>
<dbReference type="GO" id="GO:0050385">
    <property type="term" value="F:ureidoglycolate lyase activity"/>
    <property type="evidence" value="ECO:0000314"/>
    <property type="project" value="SGD"/>
</dbReference>
<dbReference type="GO" id="GO:0000256">
    <property type="term" value="P:allantoin catabolic process"/>
    <property type="evidence" value="ECO:0000305"/>
    <property type="project" value="SGD"/>
</dbReference>
<dbReference type="GO" id="GO:0006144">
    <property type="term" value="P:purine nucleobase metabolic process"/>
    <property type="evidence" value="ECO:0007669"/>
    <property type="project" value="UniProtKB-KW"/>
</dbReference>
<dbReference type="CDD" id="cd20298">
    <property type="entry name" value="cupin_UAH"/>
    <property type="match status" value="1"/>
</dbReference>
<dbReference type="FunFam" id="2.60.120.480:FF:000003">
    <property type="entry name" value="Ureidoglycolate hydrolase"/>
    <property type="match status" value="1"/>
</dbReference>
<dbReference type="Gene3D" id="2.60.120.480">
    <property type="entry name" value="Ureidoglycolate hydrolase"/>
    <property type="match status" value="1"/>
</dbReference>
<dbReference type="InterPro" id="IPR011051">
    <property type="entry name" value="RmlC_Cupin_sf"/>
</dbReference>
<dbReference type="InterPro" id="IPR047233">
    <property type="entry name" value="UAH_cupin"/>
</dbReference>
<dbReference type="InterPro" id="IPR007247">
    <property type="entry name" value="Ureidogly_lyase"/>
</dbReference>
<dbReference type="InterPro" id="IPR024060">
    <property type="entry name" value="Ureidoglycolate_lyase_dom_sf"/>
</dbReference>
<dbReference type="PANTHER" id="PTHR21221">
    <property type="entry name" value="UREIDOGLYCOLATE HYDROLASE"/>
    <property type="match status" value="1"/>
</dbReference>
<dbReference type="PANTHER" id="PTHR21221:SF1">
    <property type="entry name" value="UREIDOGLYCOLATE LYASE"/>
    <property type="match status" value="1"/>
</dbReference>
<dbReference type="Pfam" id="PF04115">
    <property type="entry name" value="Ureidogly_lyase"/>
    <property type="match status" value="1"/>
</dbReference>
<dbReference type="SUPFAM" id="SSF51182">
    <property type="entry name" value="RmlC-like cupins"/>
    <property type="match status" value="1"/>
</dbReference>
<keyword id="KW-0456">Lyase</keyword>
<keyword id="KW-0659">Purine metabolism</keyword>
<keyword id="KW-1185">Reference proteome</keyword>
<comment type="function">
    <text evidence="2">Catalyzes the catabolism of the allantoin degradation intermediate (S)-ureidoglycolate, generating urea and glyoxylate. Involved in the utilization of allantoin as secondary nitrogen source when primary sources are limiting.</text>
</comment>
<comment type="catalytic activity">
    <reaction evidence="2">
        <text>(S)-ureidoglycolate = urea + glyoxylate</text>
        <dbReference type="Rhea" id="RHEA:11304"/>
        <dbReference type="ChEBI" id="CHEBI:16199"/>
        <dbReference type="ChEBI" id="CHEBI:36655"/>
        <dbReference type="ChEBI" id="CHEBI:57296"/>
        <dbReference type="EC" id="4.3.2.3"/>
    </reaction>
</comment>
<comment type="biophysicochemical properties">
    <phDependence>
        <text evidence="3">Optimum pH is 7.3.</text>
    </phDependence>
</comment>
<comment type="pathway">
    <text>Nitrogen metabolism; (S)-allantoin degradation.</text>
</comment>
<comment type="subunit">
    <text evidence="1">Homodimer.</text>
</comment>
<comment type="induction">
    <text evidence="2">Subject to nitrogen catabolite repression.</text>
</comment>
<comment type="similarity">
    <text evidence="4">Belongs to the ureidoglycolate lyase family.</text>
</comment>
<comment type="caution">
    <text evidence="4">This enzyme was also named ureidoglycolate hydrolase in the literature. However, this is the recommended name of another enzyme (EC 3.5.1.116) acting on ureidoglycolate. To make the distinction between ammonia- or urea-releasing activities from ureidoglycolate, the use of this ambiguous name is deprecated.</text>
</comment>
<sequence>MVTVVAETLTKESFEEYGTIISPDEEISRMQNLEKGANQGTAIKLLQVSQVENKSTSKVPNWNLFRCFPQPHLNRVFTQGSNQAISHSIKVLEKHPCSTQTFVPMGRTSAEVAYLVVVAKEIGNKPDLSTLRAFTCLGNQAVTYGLGTWHAPMIVLGKEEHLDFSVLIYESLDPDRPEKDCVEEHYSDGDVCIII</sequence>
<reference key="1">
    <citation type="journal article" date="1991" name="Yeast">
        <title>The ureidoglycollate hydrolase (DAL3) gene in Saccharomyces cerevisiae.</title>
        <authorList>
            <person name="Yoo H.S."/>
            <person name="Cooper T.G."/>
        </authorList>
    </citation>
    <scope>NUCLEOTIDE SEQUENCE [GENOMIC DNA]</scope>
</reference>
<reference key="2">
    <citation type="journal article" date="1997" name="Nature">
        <title>The nucleotide sequence of Saccharomyces cerevisiae chromosome IX.</title>
        <authorList>
            <person name="Churcher C.M."/>
            <person name="Bowman S."/>
            <person name="Badcock K."/>
            <person name="Bankier A.T."/>
            <person name="Brown D."/>
            <person name="Chillingworth T."/>
            <person name="Connor R."/>
            <person name="Devlin K."/>
            <person name="Gentles S."/>
            <person name="Hamlin N."/>
            <person name="Harris D.E."/>
            <person name="Horsnell T."/>
            <person name="Hunt S."/>
            <person name="Jagels K."/>
            <person name="Jones M."/>
            <person name="Lye G."/>
            <person name="Moule S."/>
            <person name="Odell C."/>
            <person name="Pearson D."/>
            <person name="Rajandream M.A."/>
            <person name="Rice P."/>
            <person name="Rowley N."/>
            <person name="Skelton J."/>
            <person name="Smith V."/>
            <person name="Walsh S.V."/>
            <person name="Whitehead S."/>
            <person name="Barrell B.G."/>
        </authorList>
    </citation>
    <scope>NUCLEOTIDE SEQUENCE [LARGE SCALE GENOMIC DNA]</scope>
    <source>
        <strain>ATCC 204508 / S288c</strain>
    </source>
</reference>
<reference key="3">
    <citation type="journal article" date="2014" name="G3 (Bethesda)">
        <title>The reference genome sequence of Saccharomyces cerevisiae: Then and now.</title>
        <authorList>
            <person name="Engel S.R."/>
            <person name="Dietrich F.S."/>
            <person name="Fisk D.G."/>
            <person name="Binkley G."/>
            <person name="Balakrishnan R."/>
            <person name="Costanzo M.C."/>
            <person name="Dwight S.S."/>
            <person name="Hitz B.C."/>
            <person name="Karra K."/>
            <person name="Nash R.S."/>
            <person name="Weng S."/>
            <person name="Wong E.D."/>
            <person name="Lloyd P."/>
            <person name="Skrzypek M.S."/>
            <person name="Miyasato S.R."/>
            <person name="Simison M."/>
            <person name="Cherry J.M."/>
        </authorList>
    </citation>
    <scope>GENOME REANNOTATION</scope>
    <source>
        <strain>ATCC 204508 / S288c</strain>
    </source>
</reference>
<reference key="4">
    <citation type="journal article" date="1966" name="Anal. Biochem.">
        <title>The assay of yeast ureidoglycolatase.</title>
        <authorList>
            <person name="Choi K.S."/>
            <person name="Lee K.W."/>
            <person name="Roush A.H."/>
        </authorList>
    </citation>
    <scope>BIOPHYSICOCHEMICAL PROPERTIES</scope>
</reference>
<reference key="5">
    <citation type="journal article" date="1985" name="Mol. Cell. Biol.">
        <title>Identification of the ureidoglycolate hydrolase gene in the DAL gene cluster of Saccharomyces cerevisiae.</title>
        <authorList>
            <person name="Yoo H.S."/>
            <person name="Genbauffe F.S."/>
            <person name="Cooper T.G."/>
        </authorList>
    </citation>
    <scope>FUNCTION</scope>
    <scope>CATALYTIC ACTIVITY</scope>
    <scope>INDUCTION</scope>
</reference>
<organism>
    <name type="scientific">Saccharomyces cerevisiae (strain ATCC 204508 / S288c)</name>
    <name type="common">Baker's yeast</name>
    <dbReference type="NCBI Taxonomy" id="559292"/>
    <lineage>
        <taxon>Eukaryota</taxon>
        <taxon>Fungi</taxon>
        <taxon>Dikarya</taxon>
        <taxon>Ascomycota</taxon>
        <taxon>Saccharomycotina</taxon>
        <taxon>Saccharomycetes</taxon>
        <taxon>Saccharomycetales</taxon>
        <taxon>Saccharomycetaceae</taxon>
        <taxon>Saccharomyces</taxon>
    </lineage>
</organism>